<keyword id="KW-0028">Amino-acid biosynthesis</keyword>
<keyword id="KW-0057">Aromatic amino acid biosynthesis</keyword>
<keyword id="KW-0328">Glycosyltransferase</keyword>
<keyword id="KW-0460">Magnesium</keyword>
<keyword id="KW-0479">Metal-binding</keyword>
<keyword id="KW-0808">Transferase</keyword>
<keyword id="KW-0822">Tryptophan biosynthesis</keyword>
<name>TRPD_STRP7</name>
<reference key="1">
    <citation type="journal article" date="2010" name="Genome Biol.">
        <title>Structure and dynamics of the pan-genome of Streptococcus pneumoniae and closely related species.</title>
        <authorList>
            <person name="Donati C."/>
            <person name="Hiller N.L."/>
            <person name="Tettelin H."/>
            <person name="Muzzi A."/>
            <person name="Croucher N.J."/>
            <person name="Angiuoli S.V."/>
            <person name="Oggioni M."/>
            <person name="Dunning Hotopp J.C."/>
            <person name="Hu F.Z."/>
            <person name="Riley D.R."/>
            <person name="Covacci A."/>
            <person name="Mitchell T.J."/>
            <person name="Bentley S.D."/>
            <person name="Kilian M."/>
            <person name="Ehrlich G.D."/>
            <person name="Rappuoli R."/>
            <person name="Moxon E.R."/>
            <person name="Masignani V."/>
        </authorList>
    </citation>
    <scope>NUCLEOTIDE SEQUENCE [LARGE SCALE GENOMIC DNA]</scope>
    <source>
        <strain>70585</strain>
    </source>
</reference>
<organism>
    <name type="scientific">Streptococcus pneumoniae (strain 70585)</name>
    <dbReference type="NCBI Taxonomy" id="488221"/>
    <lineage>
        <taxon>Bacteria</taxon>
        <taxon>Bacillati</taxon>
        <taxon>Bacillota</taxon>
        <taxon>Bacilli</taxon>
        <taxon>Lactobacillales</taxon>
        <taxon>Streptococcaceae</taxon>
        <taxon>Streptococcus</taxon>
    </lineage>
</organism>
<accession>C1C969</accession>
<dbReference type="EC" id="2.4.2.18" evidence="1"/>
<dbReference type="EMBL" id="CP000918">
    <property type="protein sequence ID" value="ACO17280.1"/>
    <property type="molecule type" value="Genomic_DNA"/>
</dbReference>
<dbReference type="RefSeq" id="WP_000658684.1">
    <property type="nucleotide sequence ID" value="NC_012468.1"/>
</dbReference>
<dbReference type="SMR" id="C1C969"/>
<dbReference type="GeneID" id="45652966"/>
<dbReference type="KEGG" id="snm:SP70585_1876"/>
<dbReference type="HOGENOM" id="CLU_034315_2_1_9"/>
<dbReference type="UniPathway" id="UPA00035">
    <property type="reaction ID" value="UER00041"/>
</dbReference>
<dbReference type="Proteomes" id="UP000002211">
    <property type="component" value="Chromosome"/>
</dbReference>
<dbReference type="GO" id="GO:0005829">
    <property type="term" value="C:cytosol"/>
    <property type="evidence" value="ECO:0007669"/>
    <property type="project" value="TreeGrafter"/>
</dbReference>
<dbReference type="GO" id="GO:0004048">
    <property type="term" value="F:anthranilate phosphoribosyltransferase activity"/>
    <property type="evidence" value="ECO:0007669"/>
    <property type="project" value="UniProtKB-UniRule"/>
</dbReference>
<dbReference type="GO" id="GO:0000287">
    <property type="term" value="F:magnesium ion binding"/>
    <property type="evidence" value="ECO:0007669"/>
    <property type="project" value="UniProtKB-UniRule"/>
</dbReference>
<dbReference type="GO" id="GO:0000162">
    <property type="term" value="P:L-tryptophan biosynthetic process"/>
    <property type="evidence" value="ECO:0007669"/>
    <property type="project" value="UniProtKB-UniRule"/>
</dbReference>
<dbReference type="FunFam" id="3.40.1030.10:FF:000002">
    <property type="entry name" value="Anthranilate phosphoribosyltransferase"/>
    <property type="match status" value="1"/>
</dbReference>
<dbReference type="Gene3D" id="3.40.1030.10">
    <property type="entry name" value="Nucleoside phosphorylase/phosphoribosyltransferase catalytic domain"/>
    <property type="match status" value="1"/>
</dbReference>
<dbReference type="Gene3D" id="1.20.970.10">
    <property type="entry name" value="Transferase, Pyrimidine Nucleoside Phosphorylase, Chain C"/>
    <property type="match status" value="1"/>
</dbReference>
<dbReference type="HAMAP" id="MF_00211">
    <property type="entry name" value="TrpD"/>
    <property type="match status" value="1"/>
</dbReference>
<dbReference type="InterPro" id="IPR005940">
    <property type="entry name" value="Anthranilate_Pribosyl_Tfrase"/>
</dbReference>
<dbReference type="InterPro" id="IPR000312">
    <property type="entry name" value="Glycosyl_Trfase_fam3"/>
</dbReference>
<dbReference type="InterPro" id="IPR017459">
    <property type="entry name" value="Glycosyl_Trfase_fam3_N_dom"/>
</dbReference>
<dbReference type="InterPro" id="IPR036320">
    <property type="entry name" value="Glycosyl_Trfase_fam3_N_dom_sf"/>
</dbReference>
<dbReference type="InterPro" id="IPR035902">
    <property type="entry name" value="Nuc_phospho_transferase"/>
</dbReference>
<dbReference type="NCBIfam" id="TIGR01245">
    <property type="entry name" value="trpD"/>
    <property type="match status" value="1"/>
</dbReference>
<dbReference type="PANTHER" id="PTHR43285">
    <property type="entry name" value="ANTHRANILATE PHOSPHORIBOSYLTRANSFERASE"/>
    <property type="match status" value="1"/>
</dbReference>
<dbReference type="PANTHER" id="PTHR43285:SF2">
    <property type="entry name" value="ANTHRANILATE PHOSPHORIBOSYLTRANSFERASE"/>
    <property type="match status" value="1"/>
</dbReference>
<dbReference type="Pfam" id="PF02885">
    <property type="entry name" value="Glycos_trans_3N"/>
    <property type="match status" value="1"/>
</dbReference>
<dbReference type="Pfam" id="PF00591">
    <property type="entry name" value="Glycos_transf_3"/>
    <property type="match status" value="1"/>
</dbReference>
<dbReference type="SUPFAM" id="SSF52418">
    <property type="entry name" value="Nucleoside phosphorylase/phosphoribosyltransferase catalytic domain"/>
    <property type="match status" value="1"/>
</dbReference>
<dbReference type="SUPFAM" id="SSF47648">
    <property type="entry name" value="Nucleoside phosphorylase/phosphoribosyltransferase N-terminal domain"/>
    <property type="match status" value="1"/>
</dbReference>
<proteinExistence type="inferred from homology"/>
<comment type="function">
    <text evidence="1">Catalyzes the transfer of the phosphoribosyl group of 5-phosphorylribose-1-pyrophosphate (PRPP) to anthranilate to yield N-(5'-phosphoribosyl)-anthranilate (PRA).</text>
</comment>
<comment type="catalytic activity">
    <reaction evidence="1">
        <text>N-(5-phospho-beta-D-ribosyl)anthranilate + diphosphate = 5-phospho-alpha-D-ribose 1-diphosphate + anthranilate</text>
        <dbReference type="Rhea" id="RHEA:11768"/>
        <dbReference type="ChEBI" id="CHEBI:16567"/>
        <dbReference type="ChEBI" id="CHEBI:18277"/>
        <dbReference type="ChEBI" id="CHEBI:33019"/>
        <dbReference type="ChEBI" id="CHEBI:58017"/>
        <dbReference type="EC" id="2.4.2.18"/>
    </reaction>
</comment>
<comment type="cofactor">
    <cofactor evidence="1">
        <name>Mg(2+)</name>
        <dbReference type="ChEBI" id="CHEBI:18420"/>
    </cofactor>
    <text evidence="1">Binds 2 magnesium ions per monomer.</text>
</comment>
<comment type="pathway">
    <text evidence="1">Amino-acid biosynthesis; L-tryptophan biosynthesis; L-tryptophan from chorismate: step 2/5.</text>
</comment>
<comment type="subunit">
    <text evidence="1">Homodimer.</text>
</comment>
<comment type="similarity">
    <text evidence="1">Belongs to the anthranilate phosphoribosyltransferase family.</text>
</comment>
<sequence>MKEIIEKLAKFENLSGVEMTDVIERIVTGRVTEAQIASLLLALKMKGETPEERTAIAQVMRGHAQHIPTEIHDAMDNCGTGGDKSFSFNISTTAAFVLAGGGIHMAKHGNRSISSKSGSADVLEALGINLDLKPAELGKVFDKTGIVFLFAKNMHPAMKYIMPARLELGIPTIMNLTGPLIHPMALETQLLGISRPELLESTAQVLKNMGRKRAIVVAGPEGLDEAGLNGTTKIALLENGEISLSSFTPEDLGMEGYAMEDIRGGNAQENAEILLSVLKNEASPFLETTVLNAGLGFYANGKIDSIKEGVALARQVIARGKALEKLRLLQEYQK</sequence>
<gene>
    <name evidence="1" type="primary">trpD</name>
    <name type="ordered locus">SP70585_1876</name>
</gene>
<protein>
    <recommendedName>
        <fullName evidence="1">Anthranilate phosphoribosyltransferase</fullName>
        <ecNumber evidence="1">2.4.2.18</ecNumber>
    </recommendedName>
</protein>
<feature type="chain" id="PRO_1000198840" description="Anthranilate phosphoribosyltransferase">
    <location>
        <begin position="1"/>
        <end position="334"/>
    </location>
</feature>
<feature type="binding site" evidence="1">
    <location>
        <position position="79"/>
    </location>
    <ligand>
        <name>5-phospho-alpha-D-ribose 1-diphosphate</name>
        <dbReference type="ChEBI" id="CHEBI:58017"/>
    </ligand>
</feature>
<feature type="binding site" evidence="1">
    <location>
        <position position="79"/>
    </location>
    <ligand>
        <name>anthranilate</name>
        <dbReference type="ChEBI" id="CHEBI:16567"/>
        <label>1</label>
    </ligand>
</feature>
<feature type="binding site" evidence="1">
    <location>
        <begin position="82"/>
        <end position="83"/>
    </location>
    <ligand>
        <name>5-phospho-alpha-D-ribose 1-diphosphate</name>
        <dbReference type="ChEBI" id="CHEBI:58017"/>
    </ligand>
</feature>
<feature type="binding site" evidence="1">
    <location>
        <position position="87"/>
    </location>
    <ligand>
        <name>5-phospho-alpha-D-ribose 1-diphosphate</name>
        <dbReference type="ChEBI" id="CHEBI:58017"/>
    </ligand>
</feature>
<feature type="binding site" evidence="1">
    <location>
        <begin position="89"/>
        <end position="92"/>
    </location>
    <ligand>
        <name>5-phospho-alpha-D-ribose 1-diphosphate</name>
        <dbReference type="ChEBI" id="CHEBI:58017"/>
    </ligand>
</feature>
<feature type="binding site" evidence="1">
    <location>
        <position position="91"/>
    </location>
    <ligand>
        <name>Mg(2+)</name>
        <dbReference type="ChEBI" id="CHEBI:18420"/>
        <label>1</label>
    </ligand>
</feature>
<feature type="binding site" evidence="1">
    <location>
        <begin position="107"/>
        <end position="115"/>
    </location>
    <ligand>
        <name>5-phospho-alpha-D-ribose 1-diphosphate</name>
        <dbReference type="ChEBI" id="CHEBI:58017"/>
    </ligand>
</feature>
<feature type="binding site" evidence="1">
    <location>
        <position position="110"/>
    </location>
    <ligand>
        <name>anthranilate</name>
        <dbReference type="ChEBI" id="CHEBI:16567"/>
        <label>1</label>
    </ligand>
</feature>
<feature type="binding site" evidence="1">
    <location>
        <position position="119"/>
    </location>
    <ligand>
        <name>5-phospho-alpha-D-ribose 1-diphosphate</name>
        <dbReference type="ChEBI" id="CHEBI:58017"/>
    </ligand>
</feature>
<feature type="binding site" evidence="1">
    <location>
        <position position="165"/>
    </location>
    <ligand>
        <name>anthranilate</name>
        <dbReference type="ChEBI" id="CHEBI:16567"/>
        <label>2</label>
    </ligand>
</feature>
<feature type="binding site" evidence="1">
    <location>
        <position position="224"/>
    </location>
    <ligand>
        <name>Mg(2+)</name>
        <dbReference type="ChEBI" id="CHEBI:18420"/>
        <label>2</label>
    </ligand>
</feature>
<feature type="binding site" evidence="1">
    <location>
        <position position="225"/>
    </location>
    <ligand>
        <name>Mg(2+)</name>
        <dbReference type="ChEBI" id="CHEBI:18420"/>
        <label>1</label>
    </ligand>
</feature>
<feature type="binding site" evidence="1">
    <location>
        <position position="225"/>
    </location>
    <ligand>
        <name>Mg(2+)</name>
        <dbReference type="ChEBI" id="CHEBI:18420"/>
        <label>2</label>
    </ligand>
</feature>
<evidence type="ECO:0000255" key="1">
    <source>
        <dbReference type="HAMAP-Rule" id="MF_00211"/>
    </source>
</evidence>